<accession>P01590</accession>
<accession>Q61731</accession>
<dbReference type="EMBL" id="K02891">
    <property type="protein sequence ID" value="AAA39285.1"/>
    <property type="molecule type" value="mRNA"/>
</dbReference>
<dbReference type="EMBL" id="M30856">
    <property type="protein sequence ID" value="AAA39282.1"/>
    <property type="molecule type" value="mRNA"/>
</dbReference>
<dbReference type="EMBL" id="M54934">
    <property type="protein sequence ID" value="AAA39290.1"/>
    <property type="molecule type" value="mRNA"/>
</dbReference>
<dbReference type="EMBL" id="M21977">
    <property type="protein sequence ID" value="AAA39288.1"/>
    <property type="molecule type" value="mRNA"/>
</dbReference>
<dbReference type="EMBL" id="M21978">
    <property type="protein sequence ID" value="AAA39287.1"/>
    <property type="molecule type" value="mRNA"/>
</dbReference>
<dbReference type="CCDS" id="CCDS15685.1"/>
<dbReference type="PIR" id="A01857">
    <property type="entry name" value="UHMS2"/>
</dbReference>
<dbReference type="RefSeq" id="NP_032393.3">
    <property type="nucleotide sequence ID" value="NM_008367.3"/>
</dbReference>
<dbReference type="SMR" id="P01590"/>
<dbReference type="FunCoup" id="P01590">
    <property type="interactions" value="970"/>
</dbReference>
<dbReference type="STRING" id="10090.ENSMUSP00000028111"/>
<dbReference type="BindingDB" id="P01590"/>
<dbReference type="ChEMBL" id="CHEMBL3287"/>
<dbReference type="GlyCosmos" id="P01590">
    <property type="glycosylation" value="3 sites, No reported glycans"/>
</dbReference>
<dbReference type="GlyGen" id="P01590">
    <property type="glycosylation" value="3 sites"/>
</dbReference>
<dbReference type="PhosphoSitePlus" id="P01590"/>
<dbReference type="PaxDb" id="10090-ENSMUSP00000028111"/>
<dbReference type="ProteomicsDB" id="301644"/>
<dbReference type="Antibodypedia" id="3715">
    <property type="antibodies" value="3378 antibodies from 55 providers"/>
</dbReference>
<dbReference type="DNASU" id="16184"/>
<dbReference type="Ensembl" id="ENSMUST00000028111.6">
    <property type="protein sequence ID" value="ENSMUSP00000028111.5"/>
    <property type="gene ID" value="ENSMUSG00000026770.6"/>
</dbReference>
<dbReference type="GeneID" id="16184"/>
<dbReference type="KEGG" id="mmu:16184"/>
<dbReference type="UCSC" id="uc008iiq.2">
    <property type="organism name" value="mouse"/>
</dbReference>
<dbReference type="AGR" id="MGI:96549"/>
<dbReference type="CTD" id="3559"/>
<dbReference type="MGI" id="MGI:96549">
    <property type="gene designation" value="Il2ra"/>
</dbReference>
<dbReference type="VEuPathDB" id="HostDB:ENSMUSG00000026770"/>
<dbReference type="eggNOG" id="ENOG502SUAG">
    <property type="taxonomic scope" value="Eukaryota"/>
</dbReference>
<dbReference type="GeneTree" id="ENSGT00390000018872"/>
<dbReference type="HOGENOM" id="CLU_089677_1_0_1"/>
<dbReference type="InParanoid" id="P01590"/>
<dbReference type="OMA" id="TILNCEC"/>
<dbReference type="OrthoDB" id="9833060at2759"/>
<dbReference type="PhylomeDB" id="P01590"/>
<dbReference type="TreeFam" id="TF337408"/>
<dbReference type="Reactome" id="R-MMU-5673001">
    <property type="pathway name" value="RAF/MAP kinase cascade"/>
</dbReference>
<dbReference type="Reactome" id="R-MMU-9020558">
    <property type="pathway name" value="Interleukin-2 signaling"/>
</dbReference>
<dbReference type="Reactome" id="R-MMU-912526">
    <property type="pathway name" value="Interleukin receptor SHC signaling"/>
</dbReference>
<dbReference type="BioGRID-ORCS" id="16184">
    <property type="hits" value="3 hits in 78 CRISPR screens"/>
</dbReference>
<dbReference type="ChiTaRS" id="Il2ra">
    <property type="organism name" value="mouse"/>
</dbReference>
<dbReference type="PRO" id="PR:P01590"/>
<dbReference type="Proteomes" id="UP000000589">
    <property type="component" value="Chromosome 2"/>
</dbReference>
<dbReference type="RNAct" id="P01590">
    <property type="molecule type" value="protein"/>
</dbReference>
<dbReference type="Bgee" id="ENSMUSG00000026770">
    <property type="expression patterns" value="Expressed in thymus and 34 other cell types or tissues"/>
</dbReference>
<dbReference type="ExpressionAtlas" id="P01590">
    <property type="expression patterns" value="baseline and differential"/>
</dbReference>
<dbReference type="GO" id="GO:0009897">
    <property type="term" value="C:external side of plasma membrane"/>
    <property type="evidence" value="ECO:0000314"/>
    <property type="project" value="MGI"/>
</dbReference>
<dbReference type="GO" id="GO:0019976">
    <property type="term" value="F:interleukin-2 binding"/>
    <property type="evidence" value="ECO:0000353"/>
    <property type="project" value="MGI"/>
</dbReference>
<dbReference type="GO" id="GO:0004911">
    <property type="term" value="F:interleukin-2 receptor activity"/>
    <property type="evidence" value="ECO:0000315"/>
    <property type="project" value="MGI"/>
</dbReference>
<dbReference type="GO" id="GO:0050798">
    <property type="term" value="P:activated T cell proliferation"/>
    <property type="evidence" value="ECO:0000315"/>
    <property type="project" value="MGI"/>
</dbReference>
<dbReference type="GO" id="GO:0006924">
    <property type="term" value="P:activation-induced cell death of T cells"/>
    <property type="evidence" value="ECO:0000315"/>
    <property type="project" value="MGI"/>
</dbReference>
<dbReference type="GO" id="GO:0002437">
    <property type="term" value="P:inflammatory response to antigenic stimulus"/>
    <property type="evidence" value="ECO:0007669"/>
    <property type="project" value="Ensembl"/>
</dbReference>
<dbReference type="GO" id="GO:0046651">
    <property type="term" value="P:lymphocyte proliferation"/>
    <property type="evidence" value="ECO:0000315"/>
    <property type="project" value="MGI"/>
</dbReference>
<dbReference type="GO" id="GO:0050728">
    <property type="term" value="P:negative regulation of inflammatory response"/>
    <property type="evidence" value="ECO:0000315"/>
    <property type="project" value="MGI"/>
</dbReference>
<dbReference type="GO" id="GO:0050672">
    <property type="term" value="P:negative regulation of lymphocyte proliferation"/>
    <property type="evidence" value="ECO:0000315"/>
    <property type="project" value="MGI"/>
</dbReference>
<dbReference type="GO" id="GO:0042130">
    <property type="term" value="P:negative regulation of T cell proliferation"/>
    <property type="evidence" value="ECO:0000315"/>
    <property type="project" value="MGI"/>
</dbReference>
<dbReference type="GO" id="GO:0007219">
    <property type="term" value="P:Notch signaling pathway"/>
    <property type="evidence" value="ECO:0000316"/>
    <property type="project" value="MGI"/>
</dbReference>
<dbReference type="GO" id="GO:0042104">
    <property type="term" value="P:positive regulation of activated T cell proliferation"/>
    <property type="evidence" value="ECO:0000315"/>
    <property type="project" value="MGI"/>
</dbReference>
<dbReference type="GO" id="GO:0045582">
    <property type="term" value="P:positive regulation of T cell differentiation"/>
    <property type="evidence" value="ECO:0007669"/>
    <property type="project" value="Ensembl"/>
</dbReference>
<dbReference type="GO" id="GO:2000561">
    <property type="term" value="P:regulation of CD4-positive, alpha-beta T cell proliferation"/>
    <property type="evidence" value="ECO:0000315"/>
    <property type="project" value="MGI"/>
</dbReference>
<dbReference type="GO" id="GO:0046013">
    <property type="term" value="P:regulation of T cell homeostatic proliferation"/>
    <property type="evidence" value="ECO:0000315"/>
    <property type="project" value="MGI"/>
</dbReference>
<dbReference type="GO" id="GO:0002664">
    <property type="term" value="P:regulation of T cell tolerance induction"/>
    <property type="evidence" value="ECO:0007669"/>
    <property type="project" value="Ensembl"/>
</dbReference>
<dbReference type="GO" id="GO:0043029">
    <property type="term" value="P:T cell homeostasis"/>
    <property type="evidence" value="ECO:0000315"/>
    <property type="project" value="MGI"/>
</dbReference>
<dbReference type="CDD" id="cd00033">
    <property type="entry name" value="CCP"/>
    <property type="match status" value="1"/>
</dbReference>
<dbReference type="FunFam" id="2.20.28.230:FF:000004">
    <property type="entry name" value="Interleukin-2 receptor subunit alpha"/>
    <property type="match status" value="1"/>
</dbReference>
<dbReference type="Gene3D" id="2.20.28.230">
    <property type="match status" value="3"/>
</dbReference>
<dbReference type="InterPro" id="IPR015486">
    <property type="entry name" value="IL-2_rcpt_alpha"/>
</dbReference>
<dbReference type="InterPro" id="IPR035976">
    <property type="entry name" value="Sushi/SCR/CCP_sf"/>
</dbReference>
<dbReference type="InterPro" id="IPR000436">
    <property type="entry name" value="Sushi_SCR_CCP_dom"/>
</dbReference>
<dbReference type="PANTHER" id="PTHR10573">
    <property type="entry name" value="INTERLEUKIN-2 RECEPTOR ALPHA CHAIN"/>
    <property type="match status" value="1"/>
</dbReference>
<dbReference type="PANTHER" id="PTHR10573:SF0">
    <property type="entry name" value="INTERLEUKIN-2 RECEPTOR SUBUNIT ALPHA"/>
    <property type="match status" value="1"/>
</dbReference>
<dbReference type="Pfam" id="PF00084">
    <property type="entry name" value="Sushi"/>
    <property type="match status" value="2"/>
</dbReference>
<dbReference type="SMART" id="SM00032">
    <property type="entry name" value="CCP"/>
    <property type="match status" value="2"/>
</dbReference>
<dbReference type="SUPFAM" id="SSF57535">
    <property type="entry name" value="Complement control module/SCR domain"/>
    <property type="match status" value="2"/>
</dbReference>
<dbReference type="PROSITE" id="PS50923">
    <property type="entry name" value="SUSHI"/>
    <property type="match status" value="2"/>
</dbReference>
<evidence type="ECO:0000250" key="1"/>
<evidence type="ECO:0000250" key="2">
    <source>
        <dbReference type="UniProtKB" id="P01589"/>
    </source>
</evidence>
<evidence type="ECO:0000255" key="3"/>
<evidence type="ECO:0000255" key="4">
    <source>
        <dbReference type="PROSITE-ProRule" id="PRU00302"/>
    </source>
</evidence>
<evidence type="ECO:0000256" key="5">
    <source>
        <dbReference type="SAM" id="MobiDB-lite"/>
    </source>
</evidence>
<evidence type="ECO:0000305" key="6"/>
<organism>
    <name type="scientific">Mus musculus</name>
    <name type="common">Mouse</name>
    <dbReference type="NCBI Taxonomy" id="10090"/>
    <lineage>
        <taxon>Eukaryota</taxon>
        <taxon>Metazoa</taxon>
        <taxon>Chordata</taxon>
        <taxon>Craniata</taxon>
        <taxon>Vertebrata</taxon>
        <taxon>Euteleostomi</taxon>
        <taxon>Mammalia</taxon>
        <taxon>Eutheria</taxon>
        <taxon>Euarchontoglires</taxon>
        <taxon>Glires</taxon>
        <taxon>Rodentia</taxon>
        <taxon>Myomorpha</taxon>
        <taxon>Muroidea</taxon>
        <taxon>Muridae</taxon>
        <taxon>Murinae</taxon>
        <taxon>Mus</taxon>
        <taxon>Mus</taxon>
    </lineage>
</organism>
<reference key="1">
    <citation type="journal article" date="1985" name="J. Immunol.">
        <title>Nucleotide sequence and expression of a mouse interleukin 2 receptor cDNA.</title>
        <authorList>
            <person name="Miller J."/>
            <person name="Malek T.R."/>
            <person name="Leonard W.J."/>
            <person name="Greene W.C."/>
            <person name="Shevach E.M."/>
            <person name="Germain R.N."/>
        </authorList>
    </citation>
    <scope>NUCLEOTIDE SEQUENCE [MRNA]</scope>
</reference>
<reference key="2">
    <citation type="journal article" date="1985" name="Nucleic Acids Res.">
        <title>Nucleotide sequence of mouse IL-2 receptor cDNA and its comparison with the human IL-2 receptor sequence.</title>
        <authorList>
            <person name="Shimuzu A."/>
            <person name="Kondo S."/>
            <person name="Takeda S."/>
            <person name="Yodoi J."/>
            <person name="Ishida N."/>
            <person name="Sabe H."/>
            <person name="Osawa H."/>
            <person name="Diamantstein T."/>
            <person name="Nikaido T."/>
            <person name="Honjo T."/>
        </authorList>
    </citation>
    <scope>NUCLEOTIDE SEQUENCE [MRNA]</scope>
</reference>
<reference key="3">
    <citation type="journal article" date="1987" name="Immunol. Ser.">
        <title>Recombinant lymphokines and their receptors: molecular analysis for the murine interleukin-2 receptor.</title>
        <authorList>
            <person name="McKereghan K.N."/>
            <person name="Alpert A.R."/>
            <person name="Grabstein K.H."/>
            <person name="Cosman D."/>
            <person name="Cerretti D.P."/>
        </authorList>
    </citation>
    <scope>NUCLEOTIDE SEQUENCE [MRNA]</scope>
</reference>
<reference key="4">
    <citation type="journal article" date="1988" name="J. Immunol.">
        <title>p55 IL-2 receptor mRNA precursors in murine T lymphocyte nuclei.</title>
        <authorList>
            <person name="Froussard P."/>
            <person name="Chastagner P."/>
            <person name="Somme G."/>
            <person name="Abadie A."/>
            <person name="Greene W."/>
            <person name="Theze J."/>
            <person name="Longacre S."/>
        </authorList>
    </citation>
    <scope>NUCLEOTIDE SEQUENCE [MRNA] OF 1-21</scope>
</reference>
<proteinExistence type="evidence at transcript level"/>
<protein>
    <recommendedName>
        <fullName>Interleukin-2 receptor subunit alpha</fullName>
        <shortName>IL-2 receptor subunit alpha</shortName>
        <shortName>IL-2-RA</shortName>
        <shortName>IL-2R subunit alpha</shortName>
        <shortName>IL2-RA</shortName>
    </recommendedName>
    <alternativeName>
        <fullName>p55</fullName>
    </alternativeName>
    <cdAntigenName>CD25</cdAntigenName>
</protein>
<gene>
    <name type="primary">Il2ra</name>
    <name type="synonym">Il2r</name>
</gene>
<keyword id="KW-1015">Disulfide bond</keyword>
<keyword id="KW-0325">Glycoprotein</keyword>
<keyword id="KW-0391">Immunity</keyword>
<keyword id="KW-0472">Membrane</keyword>
<keyword id="KW-0675">Receptor</keyword>
<keyword id="KW-1185">Reference proteome</keyword>
<keyword id="KW-0677">Repeat</keyword>
<keyword id="KW-0732">Signal</keyword>
<keyword id="KW-0768">Sushi</keyword>
<keyword id="KW-0812">Transmembrane</keyword>
<keyword id="KW-1133">Transmembrane helix</keyword>
<feature type="signal peptide" evidence="1">
    <location>
        <begin position="1"/>
        <end position="21"/>
    </location>
</feature>
<feature type="chain" id="PRO_0000011026" description="Interleukin-2 receptor subunit alpha">
    <location>
        <begin position="22"/>
        <end position="268"/>
    </location>
</feature>
<feature type="topological domain" description="Extracellular" evidence="3">
    <location>
        <begin position="22"/>
        <end position="236"/>
    </location>
</feature>
<feature type="transmembrane region" description="Helical" evidence="3">
    <location>
        <begin position="237"/>
        <end position="257"/>
    </location>
</feature>
<feature type="topological domain" description="Cytoplasmic" evidence="3">
    <location>
        <begin position="258"/>
        <end position="268"/>
    </location>
</feature>
<feature type="domain" description="Sushi 1" evidence="4">
    <location>
        <begin position="22"/>
        <end position="79"/>
    </location>
</feature>
<feature type="domain" description="Sushi 2" evidence="4">
    <location>
        <begin position="119"/>
        <end position="182"/>
    </location>
</feature>
<feature type="region of interest" description="Disordered" evidence="5">
    <location>
        <begin position="86"/>
        <end position="109"/>
    </location>
</feature>
<feature type="region of interest" description="Disordered" evidence="5">
    <location>
        <begin position="189"/>
        <end position="219"/>
    </location>
</feature>
<feature type="compositionally biased region" description="Polar residues" evidence="5">
    <location>
        <begin position="88"/>
        <end position="109"/>
    </location>
</feature>
<feature type="compositionally biased region" description="Polar residues" evidence="5">
    <location>
        <begin position="193"/>
        <end position="211"/>
    </location>
</feature>
<feature type="glycosylation site" description="N-linked (GlcNAc...) asparagine" evidence="3">
    <location>
        <position position="33"/>
    </location>
</feature>
<feature type="glycosylation site" description="N-linked (GlcNAc...) asparagine" evidence="3">
    <location>
        <position position="43"/>
    </location>
</feature>
<feature type="glycosylation site" description="N-linked (GlcNAc...) asparagine" evidence="3">
    <location>
        <position position="116"/>
    </location>
</feature>
<feature type="disulfide bond" evidence="4">
    <location>
        <begin position="24"/>
        <end position="66"/>
    </location>
</feature>
<feature type="disulfide bond" evidence="4">
    <location>
        <begin position="49"/>
        <end position="75"/>
    </location>
</feature>
<feature type="disulfide bond" evidence="4">
    <location>
        <begin position="51"/>
        <end position="77"/>
    </location>
</feature>
<feature type="disulfide bond" evidence="4">
    <location>
        <begin position="121"/>
        <end position="164"/>
    </location>
</feature>
<feature type="disulfide bond" evidence="4">
    <location>
        <begin position="148"/>
        <end position="180"/>
    </location>
</feature>
<feature type="sequence conflict" description="In Ref. 3; AAA39290." evidence="6" ref="3">
    <original>MEPR</original>
    <variation>MCQEDGAT</variation>
    <location>
        <begin position="1"/>
        <end position="4"/>
    </location>
</feature>
<feature type="sequence conflict" description="In Ref. 2; AAA39282." evidence="6" ref="2">
    <original>M</original>
    <variation>T</variation>
    <location>
        <position position="7"/>
    </location>
</feature>
<feature type="sequence conflict" description="In Ref. 2; AAA39282." evidence="6" ref="2">
    <original>T</original>
    <variation>A</variation>
    <location>
        <position position="118"/>
    </location>
</feature>
<feature type="sequence conflict" description="In Ref. 2; AAA39282." evidence="6" ref="2">
    <original>E</original>
    <variation>V</variation>
    <location>
        <position position="140"/>
    </location>
</feature>
<feature type="sequence conflict" description="In Ref. 2; AAA39282." evidence="6" ref="2">
    <original>F</original>
    <variation>L</variation>
    <location>
        <position position="216"/>
    </location>
</feature>
<feature type="sequence conflict" description="In Ref. 2; AAA39282." evidence="6" ref="2">
    <original>E</original>
    <variation>V</variation>
    <location>
        <position position="227"/>
    </location>
</feature>
<comment type="function">
    <text evidence="2">Receptor for interleukin-2. The receptor is involved in the regulation of immune tolerance by controlling regulatory T cells (TREGs) activity. TREGs suppress the activation and expansion of autoreactive T-cells.</text>
</comment>
<comment type="subunit">
    <text>Non-covalent dimer of an alpha and a beta subunit. IL2R exists in 3 different forms: a high affinity dimer, an intermediate affinity monomer (beta subunit), and a low affinity monomer (alpha subunit). The high and intermediate affinity forms also associate with a gamma subunit.</text>
</comment>
<comment type="subcellular location">
    <subcellularLocation>
        <location>Membrane</location>
        <topology>Single-pass type I membrane protein</topology>
    </subcellularLocation>
</comment>
<name>IL2RA_MOUSE</name>
<sequence length="268" mass="30723">MEPRLLMLGFLSLTIVPSCRAELCLYDPPEVPNATFKALSYKNGTILNCECKRGFRRLKELVYMRCLGNSWSSNCQCTSNSHDKSRKQVTAQLEHQKEQQTTTDMQKPTQSMHQENLTGHCREPPPWKHEDSKRIYHFVEGQSVHYECIPGYKALQRGPAISICKMKCGKTGWTQPQLTCVDEREHHRFLASEESQGSRNSSPESETSCPITTTDFPQPTETTAMTETFVLTMEYKVAVASCLFLLISILLLSGLTWQHRWRKSRRTI</sequence>